<keyword id="KW-0010">Activator</keyword>
<keyword id="KW-0025">Alternative splicing</keyword>
<keyword id="KW-0175">Coiled coil</keyword>
<keyword id="KW-0217">Developmental protein</keyword>
<keyword id="KW-0221">Differentiation</keyword>
<keyword id="KW-0238">DNA-binding</keyword>
<keyword id="KW-0287">Flowering</keyword>
<keyword id="KW-0539">Nucleus</keyword>
<keyword id="KW-1185">Reference proteome</keyword>
<keyword id="KW-0804">Transcription</keyword>
<keyword id="KW-0805">Transcription regulation</keyword>
<evidence type="ECO:0000255" key="1"/>
<evidence type="ECO:0000255" key="2">
    <source>
        <dbReference type="PROSITE-ProRule" id="PRU00251"/>
    </source>
</evidence>
<evidence type="ECO:0000255" key="3">
    <source>
        <dbReference type="PROSITE-ProRule" id="PRU00629"/>
    </source>
</evidence>
<evidence type="ECO:0000269" key="4">
    <source>
    </source>
</evidence>
<evidence type="ECO:0000269" key="5">
    <source>
    </source>
</evidence>
<evidence type="ECO:0000269" key="6">
    <source>
    </source>
</evidence>
<evidence type="ECO:0000305" key="7"/>
<protein>
    <recommendedName>
        <fullName>Developmental protein SEPALLATA 1</fullName>
    </recommendedName>
    <alternativeName>
        <fullName>Agamous-like MADS-box protein AGL2</fullName>
    </alternativeName>
</protein>
<sequence length="251" mass="28657">MGRGRVELKRIENKINRQVTFAKRRNGLLKKAYELSVLCDAEVALIIFSNRGKLYEFCSSSNMLKTLDRYQKCSYGSIEVNNKPAKELENSYREYLKLKGRYENLQRQQRNLLGEDLGPLNSKELEQLERQLDGSLKQVRSIKTQYMLDQLSDLQNKEQMLLETNRALAMKLDDMIGVRSHHMGGGGGWEGGEQNVTYAHHQAQSQGLYQPLECNPTLQMGYDNPVCSEQITATTQAQAQQGNGYIPGWML</sequence>
<gene>
    <name type="primary">SEP1</name>
    <name type="synonym">AGL2</name>
    <name type="ordered locus">At5g15800</name>
    <name type="ORF">F14F8_180</name>
</gene>
<name>SEP1_ARATH</name>
<proteinExistence type="evidence at protein level"/>
<dbReference type="EMBL" id="M55551">
    <property type="protein sequence ID" value="AAA32732.1"/>
    <property type="molecule type" value="mRNA"/>
</dbReference>
<dbReference type="EMBL" id="AL391144">
    <property type="protein sequence ID" value="CAC01779.1"/>
    <property type="status" value="ALT_SEQ"/>
    <property type="molecule type" value="Genomic_DNA"/>
</dbReference>
<dbReference type="EMBL" id="CP002688">
    <property type="protein sequence ID" value="AED92207.1"/>
    <property type="molecule type" value="Genomic_DNA"/>
</dbReference>
<dbReference type="EMBL" id="AK118608">
    <property type="protein sequence ID" value="BAC43207.1"/>
    <property type="molecule type" value="mRNA"/>
</dbReference>
<dbReference type="EMBL" id="BT006224">
    <property type="protein sequence ID" value="AAP12873.1"/>
    <property type="molecule type" value="mRNA"/>
</dbReference>
<dbReference type="PIR" id="B39534">
    <property type="entry name" value="B39534"/>
</dbReference>
<dbReference type="PIR" id="T51409">
    <property type="entry name" value="T51409"/>
</dbReference>
<dbReference type="RefSeq" id="NP_001119230.1">
    <property type="nucleotide sequence ID" value="NM_001125758.2"/>
</dbReference>
<dbReference type="RefSeq" id="NP_568322.1">
    <molecule id="P29382-1"/>
    <property type="nucleotide sequence ID" value="NM_121585.4"/>
</dbReference>
<dbReference type="SMR" id="P29382"/>
<dbReference type="BioGRID" id="16712">
    <property type="interactions" value="29"/>
</dbReference>
<dbReference type="DIP" id="DIP-34935N"/>
<dbReference type="FunCoup" id="P29382">
    <property type="interactions" value="39"/>
</dbReference>
<dbReference type="IntAct" id="P29382">
    <property type="interactions" value="28"/>
</dbReference>
<dbReference type="STRING" id="3702.P29382"/>
<dbReference type="PaxDb" id="3702-AT5G15800.2"/>
<dbReference type="ProteomicsDB" id="234483">
    <molecule id="P29382-1"/>
</dbReference>
<dbReference type="EnsemblPlants" id="AT5G15800.1">
    <molecule id="P29382-1"/>
    <property type="protein sequence ID" value="AT5G15800.1"/>
    <property type="gene ID" value="AT5G15800"/>
</dbReference>
<dbReference type="GeneID" id="831436"/>
<dbReference type="Gramene" id="AT5G15800.1">
    <molecule id="P29382-1"/>
    <property type="protein sequence ID" value="AT5G15800.1"/>
    <property type="gene ID" value="AT5G15800"/>
</dbReference>
<dbReference type="KEGG" id="ath:AT5G15800"/>
<dbReference type="Araport" id="AT5G15800"/>
<dbReference type="TAIR" id="AT5G15800">
    <property type="gene designation" value="SEP1"/>
</dbReference>
<dbReference type="eggNOG" id="KOG0014">
    <property type="taxonomic scope" value="Eukaryota"/>
</dbReference>
<dbReference type="HOGENOM" id="CLU_053053_0_2_1"/>
<dbReference type="InParanoid" id="P29382"/>
<dbReference type="OMA" id="FCSSYNM"/>
<dbReference type="PhylomeDB" id="P29382"/>
<dbReference type="PRO" id="PR:P29382"/>
<dbReference type="Proteomes" id="UP000006548">
    <property type="component" value="Chromosome 5"/>
</dbReference>
<dbReference type="ExpressionAtlas" id="P29382">
    <property type="expression patterns" value="baseline and differential"/>
</dbReference>
<dbReference type="GO" id="GO:0005634">
    <property type="term" value="C:nucleus"/>
    <property type="evidence" value="ECO:0007669"/>
    <property type="project" value="UniProtKB-SubCell"/>
</dbReference>
<dbReference type="GO" id="GO:0003700">
    <property type="term" value="F:DNA-binding transcription factor activity"/>
    <property type="evidence" value="ECO:0007669"/>
    <property type="project" value="InterPro"/>
</dbReference>
<dbReference type="GO" id="GO:0046983">
    <property type="term" value="F:protein dimerization activity"/>
    <property type="evidence" value="ECO:0007669"/>
    <property type="project" value="InterPro"/>
</dbReference>
<dbReference type="GO" id="GO:0000977">
    <property type="term" value="F:RNA polymerase II transcription regulatory region sequence-specific DNA binding"/>
    <property type="evidence" value="ECO:0007669"/>
    <property type="project" value="InterPro"/>
</dbReference>
<dbReference type="GO" id="GO:0030154">
    <property type="term" value="P:cell differentiation"/>
    <property type="evidence" value="ECO:0007669"/>
    <property type="project" value="UniProtKB-KW"/>
</dbReference>
<dbReference type="GO" id="GO:0009908">
    <property type="term" value="P:flower development"/>
    <property type="evidence" value="ECO:0007669"/>
    <property type="project" value="UniProtKB-KW"/>
</dbReference>
<dbReference type="GO" id="GO:0045944">
    <property type="term" value="P:positive regulation of transcription by RNA polymerase II"/>
    <property type="evidence" value="ECO:0007669"/>
    <property type="project" value="InterPro"/>
</dbReference>
<dbReference type="CDD" id="cd00265">
    <property type="entry name" value="MADS_MEF2_like"/>
    <property type="match status" value="1"/>
</dbReference>
<dbReference type="FunFam" id="3.40.1810.10:FF:000004">
    <property type="entry name" value="MADS-box transcription factor 1"/>
    <property type="match status" value="1"/>
</dbReference>
<dbReference type="Gene3D" id="3.40.1810.10">
    <property type="entry name" value="Transcription factor, MADS-box"/>
    <property type="match status" value="1"/>
</dbReference>
<dbReference type="InterPro" id="IPR050142">
    <property type="entry name" value="MADS-box/MEF2_TF"/>
</dbReference>
<dbReference type="InterPro" id="IPR033896">
    <property type="entry name" value="MEF2-like_N"/>
</dbReference>
<dbReference type="InterPro" id="IPR002487">
    <property type="entry name" value="TF_Kbox"/>
</dbReference>
<dbReference type="InterPro" id="IPR002100">
    <property type="entry name" value="TF_MADSbox"/>
</dbReference>
<dbReference type="InterPro" id="IPR036879">
    <property type="entry name" value="TF_MADSbox_sf"/>
</dbReference>
<dbReference type="PANTHER" id="PTHR48019">
    <property type="entry name" value="SERUM RESPONSE FACTOR HOMOLOG"/>
    <property type="match status" value="1"/>
</dbReference>
<dbReference type="Pfam" id="PF01486">
    <property type="entry name" value="K-box"/>
    <property type="match status" value="1"/>
</dbReference>
<dbReference type="Pfam" id="PF00319">
    <property type="entry name" value="SRF-TF"/>
    <property type="match status" value="1"/>
</dbReference>
<dbReference type="PRINTS" id="PR00404">
    <property type="entry name" value="MADSDOMAIN"/>
</dbReference>
<dbReference type="SMART" id="SM00432">
    <property type="entry name" value="MADS"/>
    <property type="match status" value="1"/>
</dbReference>
<dbReference type="SUPFAM" id="SSF55455">
    <property type="entry name" value="SRF-like"/>
    <property type="match status" value="1"/>
</dbReference>
<dbReference type="PROSITE" id="PS51297">
    <property type="entry name" value="K_BOX"/>
    <property type="match status" value="1"/>
</dbReference>
<dbReference type="PROSITE" id="PS00350">
    <property type="entry name" value="MADS_BOX_1"/>
    <property type="match status" value="1"/>
</dbReference>
<dbReference type="PROSITE" id="PS50066">
    <property type="entry name" value="MADS_BOX_2"/>
    <property type="match status" value="1"/>
</dbReference>
<organism>
    <name type="scientific">Arabidopsis thaliana</name>
    <name type="common">Mouse-ear cress</name>
    <dbReference type="NCBI Taxonomy" id="3702"/>
    <lineage>
        <taxon>Eukaryota</taxon>
        <taxon>Viridiplantae</taxon>
        <taxon>Streptophyta</taxon>
        <taxon>Embryophyta</taxon>
        <taxon>Tracheophyta</taxon>
        <taxon>Spermatophyta</taxon>
        <taxon>Magnoliopsida</taxon>
        <taxon>eudicotyledons</taxon>
        <taxon>Gunneridae</taxon>
        <taxon>Pentapetalae</taxon>
        <taxon>rosids</taxon>
        <taxon>malvids</taxon>
        <taxon>Brassicales</taxon>
        <taxon>Brassicaceae</taxon>
        <taxon>Camelineae</taxon>
        <taxon>Arabidopsis</taxon>
    </lineage>
</organism>
<comment type="function">
    <text>Probable transcription factor. Functions with SEPALLATA2/AGL4 and SEPALLATA3/AGL9 to ensure proper development of petals, stamens and carpels, and to prevent the indeterminate growth of the flower meristem. Forms a heterodimer via the K-box domain with AGAMOUS, that could be involved in genes regulation during floral meristem development.</text>
</comment>
<comment type="subunit">
    <text evidence="5 6">Heterodimer with AGAMOUS capable of binding to CArG-box sequences. Interacts with AGL16 (PubMed:15805477). Interacts with TT16/AGL32 (PubMed:16080001).</text>
</comment>
<comment type="interaction">
    <interactant intactId="EBI-632935">
        <id>P29382</id>
    </interactant>
    <interactant intactId="EBI-592083">
        <id>O82794</id>
        <label>AGL24</label>
    </interactant>
    <organismsDiffer>false</organismsDiffer>
    <experiments>3</experiments>
</comment>
<comment type="interaction">
    <interactant intactId="EBI-632935">
        <id>P29382</id>
    </interactant>
    <interactant intactId="EBI-621949">
        <id>P29385</id>
        <label>AGL5</label>
    </interactant>
    <organismsDiffer>false</organismsDiffer>
    <experiments>3</experiments>
</comment>
<comment type="interaction">
    <interactant intactId="EBI-632935">
        <id>P29382</id>
    </interactant>
    <interactant intactId="EBI-592003">
        <id>P35631</id>
        <label>AP1</label>
    </interactant>
    <organismsDiffer>false</organismsDiffer>
    <experiments>4</experiments>
</comment>
<comment type="interaction">
    <interactant intactId="EBI-632935">
        <id>P29382</id>
    </interactant>
    <interactant intactId="EBI-15194131">
        <id>Q9M0U1</id>
        <label>ARF46</label>
    </interactant>
    <organismsDiffer>false</organismsDiffer>
    <experiments>3</experiments>
</comment>
<comment type="interaction">
    <interactant intactId="EBI-632935">
        <id>P29382</id>
    </interactant>
    <interactant intactId="EBI-15191981">
        <id>Q9LV59</id>
        <label>At3g24490</label>
    </interactant>
    <organismsDiffer>false</organismsDiffer>
    <experiments>3</experiments>
</comment>
<comment type="interaction">
    <interactant intactId="EBI-632935">
        <id>P29382</id>
    </interactant>
    <interactant intactId="EBI-15197443">
        <id>F4KCU5</id>
        <label>TT16</label>
    </interactant>
    <organismsDiffer>false</organismsDiffer>
    <experiments>3</experiments>
</comment>
<comment type="interaction">
    <interactant intactId="EBI-632935">
        <id>P29382</id>
    </interactant>
    <interactant intactId="EBI-621993">
        <id>Q8RYD9</id>
        <label>TT16</label>
    </interactant>
    <organismsDiffer>false</organismsDiffer>
    <experiments>3</experiments>
</comment>
<comment type="subcellular location">
    <subcellularLocation>
        <location>Nucleus</location>
    </subcellularLocation>
</comment>
<comment type="alternative products">
    <event type="alternative splicing"/>
    <isoform>
        <id>P29382-1</id>
        <name>1</name>
        <sequence type="displayed"/>
    </isoform>
    <text>A number of isoforms are produced. According to EST sequences.</text>
</comment>
<comment type="tissue specificity">
    <text>Expressed mainly in carpels, and weakly in stamens.</text>
</comment>
<comment type="developmental stage">
    <text>Expressed early during flower development.</text>
</comment>
<comment type="disruption phenotype">
    <text evidence="4">Triple mutations in the SEP1, SEP2 and SEP3 genes result in the replacement of the stamens and petals by sepals and of the carpels by a new mutant flower with sepaloid organs.</text>
</comment>
<comment type="sequence caution" evidence="7">
    <conflict type="erroneous gene model prediction">
        <sequence resource="EMBL-CDS" id="CAC01779"/>
    </conflict>
</comment>
<accession>P29382</accession>
<accession>Q9LFU6</accession>
<feature type="chain" id="PRO_0000199483" description="Developmental protein SEPALLATA 1">
    <location>
        <begin position="1"/>
        <end position="251"/>
    </location>
</feature>
<feature type="domain" description="MADS-box" evidence="2">
    <location>
        <begin position="3"/>
        <end position="57"/>
    </location>
</feature>
<feature type="domain" description="K-box" evidence="3">
    <location>
        <begin position="88"/>
        <end position="178"/>
    </location>
</feature>
<feature type="coiled-coil region" evidence="1">
    <location>
        <begin position="85"/>
        <end position="176"/>
    </location>
</feature>
<feature type="sequence conflict" description="In Ref. 1; AAA32732." evidence="7" ref="1">
    <location>
        <begin position="184"/>
        <end position="186"/>
    </location>
</feature>
<feature type="sequence conflict" description="In Ref. 1; AAA32732." evidence="7" ref="1">
    <original>Q</original>
    <variation>P</variation>
    <location>
        <position position="241"/>
    </location>
</feature>
<reference key="1">
    <citation type="journal article" date="1991" name="Genes Dev.">
        <title>AGL1-AGL6, an Arabidopsis gene family with similarity to floral homeotic and transcription factor genes.</title>
        <authorList>
            <person name="Ma H."/>
            <person name="Yanofsky M.F."/>
            <person name="Meyerowitz E.M."/>
        </authorList>
    </citation>
    <scope>NUCLEOTIDE SEQUENCE [MRNA]</scope>
    <source>
        <strain>cv. Landsberg erecta</strain>
    </source>
</reference>
<reference key="2">
    <citation type="journal article" date="2000" name="Nature">
        <title>Sequence and analysis of chromosome 5 of the plant Arabidopsis thaliana.</title>
        <authorList>
            <person name="Tabata S."/>
            <person name="Kaneko T."/>
            <person name="Nakamura Y."/>
            <person name="Kotani H."/>
            <person name="Kato T."/>
            <person name="Asamizu E."/>
            <person name="Miyajima N."/>
            <person name="Sasamoto S."/>
            <person name="Kimura T."/>
            <person name="Hosouchi T."/>
            <person name="Kawashima K."/>
            <person name="Kohara M."/>
            <person name="Matsumoto M."/>
            <person name="Matsuno A."/>
            <person name="Muraki A."/>
            <person name="Nakayama S."/>
            <person name="Nakazaki N."/>
            <person name="Naruo K."/>
            <person name="Okumura S."/>
            <person name="Shinpo S."/>
            <person name="Takeuchi C."/>
            <person name="Wada T."/>
            <person name="Watanabe A."/>
            <person name="Yamada M."/>
            <person name="Yasuda M."/>
            <person name="Sato S."/>
            <person name="de la Bastide M."/>
            <person name="Huang E."/>
            <person name="Spiegel L."/>
            <person name="Gnoj L."/>
            <person name="O'Shaughnessy A."/>
            <person name="Preston R."/>
            <person name="Habermann K."/>
            <person name="Murray J."/>
            <person name="Johnson D."/>
            <person name="Rohlfing T."/>
            <person name="Nelson J."/>
            <person name="Stoneking T."/>
            <person name="Pepin K."/>
            <person name="Spieth J."/>
            <person name="Sekhon M."/>
            <person name="Armstrong J."/>
            <person name="Becker M."/>
            <person name="Belter E."/>
            <person name="Cordum H."/>
            <person name="Cordes M."/>
            <person name="Courtney L."/>
            <person name="Courtney W."/>
            <person name="Dante M."/>
            <person name="Du H."/>
            <person name="Edwards J."/>
            <person name="Fryman J."/>
            <person name="Haakensen B."/>
            <person name="Lamar E."/>
            <person name="Latreille P."/>
            <person name="Leonard S."/>
            <person name="Meyer R."/>
            <person name="Mulvaney E."/>
            <person name="Ozersky P."/>
            <person name="Riley A."/>
            <person name="Strowmatt C."/>
            <person name="Wagner-McPherson C."/>
            <person name="Wollam A."/>
            <person name="Yoakum M."/>
            <person name="Bell M."/>
            <person name="Dedhia N."/>
            <person name="Parnell L."/>
            <person name="Shah R."/>
            <person name="Rodriguez M."/>
            <person name="Hoon See L."/>
            <person name="Vil D."/>
            <person name="Baker J."/>
            <person name="Kirchoff K."/>
            <person name="Toth K."/>
            <person name="King L."/>
            <person name="Bahret A."/>
            <person name="Miller B."/>
            <person name="Marra M.A."/>
            <person name="Martienssen R."/>
            <person name="McCombie W.R."/>
            <person name="Wilson R.K."/>
            <person name="Murphy G."/>
            <person name="Bancroft I."/>
            <person name="Volckaert G."/>
            <person name="Wambutt R."/>
            <person name="Duesterhoeft A."/>
            <person name="Stiekema W."/>
            <person name="Pohl T."/>
            <person name="Entian K.-D."/>
            <person name="Terryn N."/>
            <person name="Hartley N."/>
            <person name="Bent E."/>
            <person name="Johnson S."/>
            <person name="Langham S.-A."/>
            <person name="McCullagh B."/>
            <person name="Robben J."/>
            <person name="Grymonprez B."/>
            <person name="Zimmermann W."/>
            <person name="Ramsperger U."/>
            <person name="Wedler H."/>
            <person name="Balke K."/>
            <person name="Wedler E."/>
            <person name="Peters S."/>
            <person name="van Staveren M."/>
            <person name="Dirkse W."/>
            <person name="Mooijman P."/>
            <person name="Klein Lankhorst R."/>
            <person name="Weitzenegger T."/>
            <person name="Bothe G."/>
            <person name="Rose M."/>
            <person name="Hauf J."/>
            <person name="Berneiser S."/>
            <person name="Hempel S."/>
            <person name="Feldpausch M."/>
            <person name="Lamberth S."/>
            <person name="Villarroel R."/>
            <person name="Gielen J."/>
            <person name="Ardiles W."/>
            <person name="Bents O."/>
            <person name="Lemcke K."/>
            <person name="Kolesov G."/>
            <person name="Mayer K.F.X."/>
            <person name="Rudd S."/>
            <person name="Schoof H."/>
            <person name="Schueller C."/>
            <person name="Zaccaria P."/>
            <person name="Mewes H.-W."/>
            <person name="Bevan M."/>
            <person name="Fransz P.F."/>
        </authorList>
    </citation>
    <scope>NUCLEOTIDE SEQUENCE [LARGE SCALE GENOMIC DNA]</scope>
    <source>
        <strain>cv. Columbia</strain>
    </source>
</reference>
<reference key="3">
    <citation type="journal article" date="2017" name="Plant J.">
        <title>Araport11: a complete reannotation of the Arabidopsis thaliana reference genome.</title>
        <authorList>
            <person name="Cheng C.Y."/>
            <person name="Krishnakumar V."/>
            <person name="Chan A.P."/>
            <person name="Thibaud-Nissen F."/>
            <person name="Schobel S."/>
            <person name="Town C.D."/>
        </authorList>
    </citation>
    <scope>GENOME REANNOTATION</scope>
    <source>
        <strain>cv. Columbia</strain>
    </source>
</reference>
<reference key="4">
    <citation type="journal article" date="2002" name="Science">
        <title>Functional annotation of a full-length Arabidopsis cDNA collection.</title>
        <authorList>
            <person name="Seki M."/>
            <person name="Narusaka M."/>
            <person name="Kamiya A."/>
            <person name="Ishida J."/>
            <person name="Satou M."/>
            <person name="Sakurai T."/>
            <person name="Nakajima M."/>
            <person name="Enju A."/>
            <person name="Akiyama K."/>
            <person name="Oono Y."/>
            <person name="Muramatsu M."/>
            <person name="Hayashizaki Y."/>
            <person name="Kawai J."/>
            <person name="Carninci P."/>
            <person name="Itoh M."/>
            <person name="Ishii Y."/>
            <person name="Arakawa T."/>
            <person name="Shibata K."/>
            <person name="Shinagawa A."/>
            <person name="Shinozaki K."/>
        </authorList>
    </citation>
    <scope>NUCLEOTIDE SEQUENCE [LARGE SCALE MRNA]</scope>
    <source>
        <strain>cv. Columbia</strain>
    </source>
</reference>
<reference key="5">
    <citation type="journal article" date="2003" name="Science">
        <title>Empirical analysis of transcriptional activity in the Arabidopsis genome.</title>
        <authorList>
            <person name="Yamada K."/>
            <person name="Lim J."/>
            <person name="Dale J.M."/>
            <person name="Chen H."/>
            <person name="Shinn P."/>
            <person name="Palm C.J."/>
            <person name="Southwick A.M."/>
            <person name="Wu H.C."/>
            <person name="Kim C.J."/>
            <person name="Nguyen M."/>
            <person name="Pham P.K."/>
            <person name="Cheuk R.F."/>
            <person name="Karlin-Newmann G."/>
            <person name="Liu S.X."/>
            <person name="Lam B."/>
            <person name="Sakano H."/>
            <person name="Wu T."/>
            <person name="Yu G."/>
            <person name="Miranda M."/>
            <person name="Quach H.L."/>
            <person name="Tripp M."/>
            <person name="Chang C.H."/>
            <person name="Lee J.M."/>
            <person name="Toriumi M.J."/>
            <person name="Chan M.M."/>
            <person name="Tang C.C."/>
            <person name="Onodera C.S."/>
            <person name="Deng J.M."/>
            <person name="Akiyama K."/>
            <person name="Ansari Y."/>
            <person name="Arakawa T."/>
            <person name="Banh J."/>
            <person name="Banno F."/>
            <person name="Bowser L."/>
            <person name="Brooks S.Y."/>
            <person name="Carninci P."/>
            <person name="Chao Q."/>
            <person name="Choy N."/>
            <person name="Enju A."/>
            <person name="Goldsmith A.D."/>
            <person name="Gurjal M."/>
            <person name="Hansen N.F."/>
            <person name="Hayashizaki Y."/>
            <person name="Johnson-Hopson C."/>
            <person name="Hsuan V.W."/>
            <person name="Iida K."/>
            <person name="Karnes M."/>
            <person name="Khan S."/>
            <person name="Koesema E."/>
            <person name="Ishida J."/>
            <person name="Jiang P.X."/>
            <person name="Jones T."/>
            <person name="Kawai J."/>
            <person name="Kamiya A."/>
            <person name="Meyers C."/>
            <person name="Nakajima M."/>
            <person name="Narusaka M."/>
            <person name="Seki M."/>
            <person name="Sakurai T."/>
            <person name="Satou M."/>
            <person name="Tamse R."/>
            <person name="Vaysberg M."/>
            <person name="Wallender E.K."/>
            <person name="Wong C."/>
            <person name="Yamamura Y."/>
            <person name="Yuan S."/>
            <person name="Shinozaki K."/>
            <person name="Davis R.W."/>
            <person name="Theologis A."/>
            <person name="Ecker J.R."/>
        </authorList>
    </citation>
    <scope>NUCLEOTIDE SEQUENCE [LARGE SCALE MRNA]</scope>
    <source>
        <strain>cv. Columbia</strain>
    </source>
</reference>
<reference key="6">
    <citation type="journal article" date="1997" name="Plant J.">
        <title>Specific interactions between the K domains of AG and AGLs, members of the MADS domain family of DNA binding proteins.</title>
        <authorList>
            <person name="Fan H.-Y."/>
            <person name="Hu Y."/>
            <person name="Tudor M."/>
            <person name="Ma H."/>
        </authorList>
    </citation>
    <scope>CHARACTERIZATION</scope>
</reference>
<reference key="7">
    <citation type="journal article" date="2000" name="Nature">
        <title>B and C floral organ identity functions require SEPALLATA MADS-box genes.</title>
        <authorList>
            <person name="Pelaz S."/>
            <person name="Ditta G.S."/>
            <person name="Baumann E."/>
            <person name="Wisman E."/>
            <person name="Yanofsky M.F."/>
        </authorList>
    </citation>
    <scope>CHARACTERIZATION</scope>
    <scope>DISRUPTION PHENOTYPE</scope>
</reference>
<reference key="8">
    <citation type="journal article" date="2005" name="Mol. Genet. Genomics">
        <title>Mutant analysis, protein-protein interactions and subcellular localization of the Arabidopsis B sister (ABS) protein.</title>
        <authorList>
            <person name="Kaufmann K."/>
            <person name="Anfang N."/>
            <person name="Saedler H."/>
            <person name="Theissen G."/>
        </authorList>
    </citation>
    <scope>INTERACTION WITH TT16/AGL32</scope>
</reference>
<reference key="9">
    <citation type="journal article" date="2005" name="Plant Cell">
        <title>Comprehensive interaction map of the Arabidopsis MADS Box transcription factors.</title>
        <authorList>
            <person name="de Folter S."/>
            <person name="Immink R.G.H."/>
            <person name="Kieffer M."/>
            <person name="Parenicova L."/>
            <person name="Henz S.R."/>
            <person name="Weigel D."/>
            <person name="Busscher M."/>
            <person name="Kooiker M."/>
            <person name="Colombo L."/>
            <person name="Kater M.M."/>
            <person name="Davies B."/>
            <person name="Angenent G.C."/>
        </authorList>
    </citation>
    <scope>INTERACTION WITH AGL16</scope>
</reference>